<keyword id="KW-0963">Cytoplasm</keyword>
<keyword id="KW-0378">Hydrolase</keyword>
<keyword id="KW-1185">Reference proteome</keyword>
<accession>P42886</accession>
<reference key="1">
    <citation type="journal article" date="1994" name="Mol. Gen. Genet.">
        <title>A 4.6 kb DNA region of Rhizobium meliloti involved in determining urease and hydrogenase activities carries the structural genes for urease (ureA, ureB, ureC) interrupted by other open reading frames.</title>
        <authorList>
            <person name="Miksch G."/>
            <person name="Arnold W."/>
            <person name="Lentzsch P."/>
            <person name="Priefer U.B."/>
            <person name="Puehler A."/>
        </authorList>
    </citation>
    <scope>NUCLEOTIDE SEQUENCE [GENOMIC DNA]</scope>
    <source>
        <strain>AK631</strain>
    </source>
</reference>
<reference key="2">
    <citation type="journal article" date="2001" name="Proc. Natl. Acad. Sci. U.S.A.">
        <title>Analysis of the chromosome sequence of the legume symbiont Sinorhizobium meliloti strain 1021.</title>
        <authorList>
            <person name="Capela D."/>
            <person name="Barloy-Hubler F."/>
            <person name="Gouzy J."/>
            <person name="Bothe G."/>
            <person name="Ampe F."/>
            <person name="Batut J."/>
            <person name="Boistard P."/>
            <person name="Becker A."/>
            <person name="Boutry M."/>
            <person name="Cadieu E."/>
            <person name="Dreano S."/>
            <person name="Gloux S."/>
            <person name="Godrie T."/>
            <person name="Goffeau A."/>
            <person name="Kahn D."/>
            <person name="Kiss E."/>
            <person name="Lelaure V."/>
            <person name="Masuy D."/>
            <person name="Pohl T."/>
            <person name="Portetelle D."/>
            <person name="Puehler A."/>
            <person name="Purnelle B."/>
            <person name="Ramsperger U."/>
            <person name="Renard C."/>
            <person name="Thebault P."/>
            <person name="Vandenbol M."/>
            <person name="Weidner S."/>
            <person name="Galibert F."/>
        </authorList>
    </citation>
    <scope>NUCLEOTIDE SEQUENCE [LARGE SCALE GENOMIC DNA]</scope>
    <source>
        <strain>1021</strain>
    </source>
</reference>
<reference key="3">
    <citation type="journal article" date="2001" name="Science">
        <title>The composite genome of the legume symbiont Sinorhizobium meliloti.</title>
        <authorList>
            <person name="Galibert F."/>
            <person name="Finan T.M."/>
            <person name="Long S.R."/>
            <person name="Puehler A."/>
            <person name="Abola P."/>
            <person name="Ampe F."/>
            <person name="Barloy-Hubler F."/>
            <person name="Barnett M.J."/>
            <person name="Becker A."/>
            <person name="Boistard P."/>
            <person name="Bothe G."/>
            <person name="Boutry M."/>
            <person name="Bowser L."/>
            <person name="Buhrmester J."/>
            <person name="Cadieu E."/>
            <person name="Capela D."/>
            <person name="Chain P."/>
            <person name="Cowie A."/>
            <person name="Davis R.W."/>
            <person name="Dreano S."/>
            <person name="Federspiel N.A."/>
            <person name="Fisher R.F."/>
            <person name="Gloux S."/>
            <person name="Godrie T."/>
            <person name="Goffeau A."/>
            <person name="Golding B."/>
            <person name="Gouzy J."/>
            <person name="Gurjal M."/>
            <person name="Hernandez-Lucas I."/>
            <person name="Hong A."/>
            <person name="Huizar L."/>
            <person name="Hyman R.W."/>
            <person name="Jones T."/>
            <person name="Kahn D."/>
            <person name="Kahn M.L."/>
            <person name="Kalman S."/>
            <person name="Keating D.H."/>
            <person name="Kiss E."/>
            <person name="Komp C."/>
            <person name="Lelaure V."/>
            <person name="Masuy D."/>
            <person name="Palm C."/>
            <person name="Peck M.C."/>
            <person name="Pohl T.M."/>
            <person name="Portetelle D."/>
            <person name="Purnelle B."/>
            <person name="Ramsperger U."/>
            <person name="Surzycki R."/>
            <person name="Thebault P."/>
            <person name="Vandenbol M."/>
            <person name="Vorhoelter F.J."/>
            <person name="Weidner S."/>
            <person name="Wells D.H."/>
            <person name="Wong K."/>
            <person name="Yeh K.-C."/>
            <person name="Batut J."/>
        </authorList>
    </citation>
    <scope>NUCLEOTIDE SEQUENCE [LARGE SCALE GENOMIC DNA]</scope>
    <source>
        <strain>1021</strain>
    </source>
</reference>
<evidence type="ECO:0000255" key="1">
    <source>
        <dbReference type="HAMAP-Rule" id="MF_01954"/>
    </source>
</evidence>
<proteinExistence type="inferred from homology"/>
<comment type="catalytic activity">
    <reaction evidence="1">
        <text>urea + 2 H2O + H(+) = hydrogencarbonate + 2 NH4(+)</text>
        <dbReference type="Rhea" id="RHEA:20557"/>
        <dbReference type="ChEBI" id="CHEBI:15377"/>
        <dbReference type="ChEBI" id="CHEBI:15378"/>
        <dbReference type="ChEBI" id="CHEBI:16199"/>
        <dbReference type="ChEBI" id="CHEBI:17544"/>
        <dbReference type="ChEBI" id="CHEBI:28938"/>
        <dbReference type="EC" id="3.5.1.5"/>
    </reaction>
</comment>
<comment type="pathway">
    <text evidence="1">Nitrogen metabolism; urea degradation; CO(2) and NH(3) from urea (urease route): step 1/1.</text>
</comment>
<comment type="subunit">
    <text evidence="1">Heterotrimer of UreA (gamma), UreB (beta) and UreC (alpha) subunits. Three heterotrimers associate to form the active enzyme.</text>
</comment>
<comment type="subcellular location">
    <subcellularLocation>
        <location evidence="1">Cytoplasm</location>
    </subcellularLocation>
</comment>
<comment type="similarity">
    <text evidence="1">Belongs to the urease beta subunit family.</text>
</comment>
<organism>
    <name type="scientific">Rhizobium meliloti (strain 1021)</name>
    <name type="common">Ensifer meliloti</name>
    <name type="synonym">Sinorhizobium meliloti</name>
    <dbReference type="NCBI Taxonomy" id="266834"/>
    <lineage>
        <taxon>Bacteria</taxon>
        <taxon>Pseudomonadati</taxon>
        <taxon>Pseudomonadota</taxon>
        <taxon>Alphaproteobacteria</taxon>
        <taxon>Hyphomicrobiales</taxon>
        <taxon>Rhizobiaceae</taxon>
        <taxon>Sinorhizobium/Ensifer group</taxon>
        <taxon>Sinorhizobium</taxon>
    </lineage>
</organism>
<feature type="chain" id="PRO_0000067586" description="Urease subunit beta">
    <location>
        <begin position="1"/>
        <end position="101"/>
    </location>
</feature>
<protein>
    <recommendedName>
        <fullName evidence="1">Urease subunit beta</fullName>
        <ecNumber evidence="1">3.5.1.5</ecNumber>
    </recommendedName>
    <alternativeName>
        <fullName evidence="1">Urea amidohydrolase subunit beta</fullName>
    </alternativeName>
</protein>
<gene>
    <name evidence="1" type="primary">ureB</name>
    <name type="ordered locus">R02473</name>
    <name type="ORF">SMc01939</name>
</gene>
<sequence>MIPGEIIAAAGEIELNAGLETVSIEVANSGDRPVQVGSHYHFAETNPGLIFDRDAARGKRLDIPAGTAVRFEPGQTRQVTLIPLSGKREVFGFRQQVMGKL</sequence>
<dbReference type="EC" id="3.5.1.5" evidence="1"/>
<dbReference type="EMBL" id="S69145">
    <property type="protein sequence ID" value="AAB30136.1"/>
    <property type="molecule type" value="Genomic_DNA"/>
</dbReference>
<dbReference type="EMBL" id="AL591688">
    <property type="protein sequence ID" value="CAC47052.1"/>
    <property type="molecule type" value="Genomic_DNA"/>
</dbReference>
<dbReference type="PIR" id="S42604">
    <property type="entry name" value="S42604"/>
</dbReference>
<dbReference type="RefSeq" id="NP_386579.1">
    <property type="nucleotide sequence ID" value="NC_003047.1"/>
</dbReference>
<dbReference type="RefSeq" id="WP_003525615.1">
    <property type="nucleotide sequence ID" value="NC_003047.1"/>
</dbReference>
<dbReference type="SMR" id="P42886"/>
<dbReference type="EnsemblBacteria" id="CAC47052">
    <property type="protein sequence ID" value="CAC47052"/>
    <property type="gene ID" value="SMc01939"/>
</dbReference>
<dbReference type="KEGG" id="sme:SMc01939"/>
<dbReference type="PATRIC" id="fig|266834.11.peg.3962"/>
<dbReference type="eggNOG" id="COG0832">
    <property type="taxonomic scope" value="Bacteria"/>
</dbReference>
<dbReference type="HOGENOM" id="CLU_129707_1_1_5"/>
<dbReference type="OrthoDB" id="9797217at2"/>
<dbReference type="BioCyc" id="MetaCyc:MONOMER-11555"/>
<dbReference type="UniPathway" id="UPA00258">
    <property type="reaction ID" value="UER00370"/>
</dbReference>
<dbReference type="Proteomes" id="UP000001976">
    <property type="component" value="Chromosome"/>
</dbReference>
<dbReference type="GO" id="GO:0035550">
    <property type="term" value="C:urease complex"/>
    <property type="evidence" value="ECO:0007669"/>
    <property type="project" value="InterPro"/>
</dbReference>
<dbReference type="GO" id="GO:0009039">
    <property type="term" value="F:urease activity"/>
    <property type="evidence" value="ECO:0007669"/>
    <property type="project" value="UniProtKB-UniRule"/>
</dbReference>
<dbReference type="GO" id="GO:0043419">
    <property type="term" value="P:urea catabolic process"/>
    <property type="evidence" value="ECO:0007669"/>
    <property type="project" value="UniProtKB-UniRule"/>
</dbReference>
<dbReference type="CDD" id="cd00407">
    <property type="entry name" value="Urease_beta"/>
    <property type="match status" value="1"/>
</dbReference>
<dbReference type="FunFam" id="2.10.150.10:FF:000001">
    <property type="entry name" value="Urease subunit beta"/>
    <property type="match status" value="1"/>
</dbReference>
<dbReference type="Gene3D" id="2.10.150.10">
    <property type="entry name" value="Urease, beta subunit"/>
    <property type="match status" value="1"/>
</dbReference>
<dbReference type="HAMAP" id="MF_01954">
    <property type="entry name" value="Urease_beta"/>
    <property type="match status" value="1"/>
</dbReference>
<dbReference type="InterPro" id="IPR002019">
    <property type="entry name" value="Urease_beta-like"/>
</dbReference>
<dbReference type="InterPro" id="IPR036461">
    <property type="entry name" value="Urease_betasu_sf"/>
</dbReference>
<dbReference type="InterPro" id="IPR050069">
    <property type="entry name" value="Urease_subunit"/>
</dbReference>
<dbReference type="NCBIfam" id="NF009682">
    <property type="entry name" value="PRK13203.1"/>
    <property type="match status" value="1"/>
</dbReference>
<dbReference type="NCBIfam" id="TIGR00192">
    <property type="entry name" value="urease_beta"/>
    <property type="match status" value="1"/>
</dbReference>
<dbReference type="PANTHER" id="PTHR33569">
    <property type="entry name" value="UREASE"/>
    <property type="match status" value="1"/>
</dbReference>
<dbReference type="PANTHER" id="PTHR33569:SF1">
    <property type="entry name" value="UREASE"/>
    <property type="match status" value="1"/>
</dbReference>
<dbReference type="Pfam" id="PF00699">
    <property type="entry name" value="Urease_beta"/>
    <property type="match status" value="1"/>
</dbReference>
<dbReference type="SUPFAM" id="SSF51278">
    <property type="entry name" value="Urease, beta-subunit"/>
    <property type="match status" value="1"/>
</dbReference>
<name>URE2_RHIME</name>